<organism>
    <name type="scientific">Shigella flexneri</name>
    <dbReference type="NCBI Taxonomy" id="623"/>
    <lineage>
        <taxon>Bacteria</taxon>
        <taxon>Pseudomonadati</taxon>
        <taxon>Pseudomonadota</taxon>
        <taxon>Gammaproteobacteria</taxon>
        <taxon>Enterobacterales</taxon>
        <taxon>Enterobacteriaceae</taxon>
        <taxon>Shigella</taxon>
    </lineage>
</organism>
<gene>
    <name evidence="1" type="primary">frr</name>
    <name type="ordered locus">SF0162</name>
    <name type="ordered locus">S0165</name>
</gene>
<protein>
    <recommendedName>
        <fullName evidence="1">Ribosome-recycling factor</fullName>
        <shortName evidence="1">RRF</shortName>
    </recommendedName>
    <alternativeName>
        <fullName evidence="1">Ribosome-releasing factor</fullName>
    </alternativeName>
</protein>
<dbReference type="EMBL" id="AE005674">
    <property type="protein sequence ID" value="AAN41824.1"/>
    <property type="molecule type" value="Genomic_DNA"/>
</dbReference>
<dbReference type="EMBL" id="AE014073">
    <property type="protein sequence ID" value="AAP15705.1"/>
    <property type="molecule type" value="Genomic_DNA"/>
</dbReference>
<dbReference type="RefSeq" id="NP_706117.1">
    <property type="nucleotide sequence ID" value="NC_004337.2"/>
</dbReference>
<dbReference type="RefSeq" id="WP_000622418.1">
    <property type="nucleotide sequence ID" value="NZ_WPGW01000006.1"/>
</dbReference>
<dbReference type="SMR" id="P0A808"/>
<dbReference type="STRING" id="198214.SF0162"/>
<dbReference type="DrugBank" id="DB04082">
    <property type="generic name" value="Decyloxy-Methanol"/>
</dbReference>
<dbReference type="PaxDb" id="198214-SF0162"/>
<dbReference type="GeneID" id="1024426"/>
<dbReference type="GeneID" id="93777253"/>
<dbReference type="KEGG" id="sfl:SF0162"/>
<dbReference type="KEGG" id="sfx:S0165"/>
<dbReference type="PATRIC" id="fig|198214.7.peg.183"/>
<dbReference type="HOGENOM" id="CLU_073981_2_1_6"/>
<dbReference type="Proteomes" id="UP000001006">
    <property type="component" value="Chromosome"/>
</dbReference>
<dbReference type="Proteomes" id="UP000002673">
    <property type="component" value="Chromosome"/>
</dbReference>
<dbReference type="GO" id="GO:0005829">
    <property type="term" value="C:cytosol"/>
    <property type="evidence" value="ECO:0007669"/>
    <property type="project" value="GOC"/>
</dbReference>
<dbReference type="GO" id="GO:0043023">
    <property type="term" value="F:ribosomal large subunit binding"/>
    <property type="evidence" value="ECO:0007669"/>
    <property type="project" value="TreeGrafter"/>
</dbReference>
<dbReference type="GO" id="GO:0002184">
    <property type="term" value="P:cytoplasmic translational termination"/>
    <property type="evidence" value="ECO:0007669"/>
    <property type="project" value="TreeGrafter"/>
</dbReference>
<dbReference type="CDD" id="cd00520">
    <property type="entry name" value="RRF"/>
    <property type="match status" value="1"/>
</dbReference>
<dbReference type="FunFam" id="1.10.132.20:FF:000001">
    <property type="entry name" value="Ribosome-recycling factor"/>
    <property type="match status" value="1"/>
</dbReference>
<dbReference type="FunFam" id="3.30.1360.40:FF:000001">
    <property type="entry name" value="Ribosome-recycling factor"/>
    <property type="match status" value="1"/>
</dbReference>
<dbReference type="Gene3D" id="3.30.1360.40">
    <property type="match status" value="1"/>
</dbReference>
<dbReference type="Gene3D" id="1.10.132.20">
    <property type="entry name" value="Ribosome-recycling factor"/>
    <property type="match status" value="1"/>
</dbReference>
<dbReference type="HAMAP" id="MF_00040">
    <property type="entry name" value="RRF"/>
    <property type="match status" value="1"/>
</dbReference>
<dbReference type="InterPro" id="IPR002661">
    <property type="entry name" value="Ribosome_recyc_fac"/>
</dbReference>
<dbReference type="InterPro" id="IPR023584">
    <property type="entry name" value="Ribosome_recyc_fac_dom"/>
</dbReference>
<dbReference type="InterPro" id="IPR036191">
    <property type="entry name" value="RRF_sf"/>
</dbReference>
<dbReference type="NCBIfam" id="TIGR00496">
    <property type="entry name" value="frr"/>
    <property type="match status" value="1"/>
</dbReference>
<dbReference type="PANTHER" id="PTHR20982:SF3">
    <property type="entry name" value="MITOCHONDRIAL RIBOSOME RECYCLING FACTOR PSEUDO 1"/>
    <property type="match status" value="1"/>
</dbReference>
<dbReference type="PANTHER" id="PTHR20982">
    <property type="entry name" value="RIBOSOME RECYCLING FACTOR"/>
    <property type="match status" value="1"/>
</dbReference>
<dbReference type="Pfam" id="PF01765">
    <property type="entry name" value="RRF"/>
    <property type="match status" value="1"/>
</dbReference>
<dbReference type="SUPFAM" id="SSF55194">
    <property type="entry name" value="Ribosome recycling factor, RRF"/>
    <property type="match status" value="1"/>
</dbReference>
<feature type="chain" id="PRO_0000167536" description="Ribosome-recycling factor">
    <location>
        <begin position="1"/>
        <end position="185"/>
    </location>
</feature>
<feature type="modified residue" description="N6-acetyllysine" evidence="1">
    <location>
        <position position="162"/>
    </location>
</feature>
<reference key="1">
    <citation type="journal article" date="2002" name="Nucleic Acids Res.">
        <title>Genome sequence of Shigella flexneri 2a: insights into pathogenicity through comparison with genomes of Escherichia coli K12 and O157.</title>
        <authorList>
            <person name="Jin Q."/>
            <person name="Yuan Z."/>
            <person name="Xu J."/>
            <person name="Wang Y."/>
            <person name="Shen Y."/>
            <person name="Lu W."/>
            <person name="Wang J."/>
            <person name="Liu H."/>
            <person name="Yang J."/>
            <person name="Yang F."/>
            <person name="Zhang X."/>
            <person name="Zhang J."/>
            <person name="Yang G."/>
            <person name="Wu H."/>
            <person name="Qu D."/>
            <person name="Dong J."/>
            <person name="Sun L."/>
            <person name="Xue Y."/>
            <person name="Zhao A."/>
            <person name="Gao Y."/>
            <person name="Zhu J."/>
            <person name="Kan B."/>
            <person name="Ding K."/>
            <person name="Chen S."/>
            <person name="Cheng H."/>
            <person name="Yao Z."/>
            <person name="He B."/>
            <person name="Chen R."/>
            <person name="Ma D."/>
            <person name="Qiang B."/>
            <person name="Wen Y."/>
            <person name="Hou Y."/>
            <person name="Yu J."/>
        </authorList>
    </citation>
    <scope>NUCLEOTIDE SEQUENCE [LARGE SCALE GENOMIC DNA]</scope>
    <source>
        <strain>301 / Serotype 2a</strain>
    </source>
</reference>
<reference key="2">
    <citation type="journal article" date="2003" name="Infect. Immun.">
        <title>Complete genome sequence and comparative genomics of Shigella flexneri serotype 2a strain 2457T.</title>
        <authorList>
            <person name="Wei J."/>
            <person name="Goldberg M.B."/>
            <person name="Burland V."/>
            <person name="Venkatesan M.M."/>
            <person name="Deng W."/>
            <person name="Fournier G."/>
            <person name="Mayhew G.F."/>
            <person name="Plunkett G. III"/>
            <person name="Rose D.J."/>
            <person name="Darling A."/>
            <person name="Mau B."/>
            <person name="Perna N.T."/>
            <person name="Payne S.M."/>
            <person name="Runyen-Janecky L.J."/>
            <person name="Zhou S."/>
            <person name="Schwartz D.C."/>
            <person name="Blattner F.R."/>
        </authorList>
    </citation>
    <scope>NUCLEOTIDE SEQUENCE [LARGE SCALE GENOMIC DNA]</scope>
    <source>
        <strain>ATCC 700930 / 2457T / Serotype 2a</strain>
    </source>
</reference>
<evidence type="ECO:0000255" key="1">
    <source>
        <dbReference type="HAMAP-Rule" id="MF_00040"/>
    </source>
</evidence>
<comment type="function">
    <text evidence="1">Responsible for the release of ribosomes from messenger RNA at the termination of protein biosynthesis. May increase the efficiency of translation by recycling ribosomes from one round of translation to another.</text>
</comment>
<comment type="subcellular location">
    <subcellularLocation>
        <location evidence="1">Cytoplasm</location>
    </subcellularLocation>
</comment>
<comment type="similarity">
    <text evidence="1">Belongs to the RRF family.</text>
</comment>
<sequence length="185" mass="20639">MISDIRKDAEVRMDKCVEAFKTQISKIRTGRASPSLLDGIVVEYYGTPTPLRQLASVTVEDSRTLKINVFDRSMSPAVEKAIMASDLGLNPNSAGSDIRVPLPPLTEERRKDLTKIVRGEAEQARVAVRNVRRDANDKVKALLKDKEISEDDDRRSQDDVQKLTDAAIKKIEAALADKEAELMQF</sequence>
<proteinExistence type="inferred from homology"/>
<keyword id="KW-0007">Acetylation</keyword>
<keyword id="KW-0963">Cytoplasm</keyword>
<keyword id="KW-0648">Protein biosynthesis</keyword>
<keyword id="KW-1185">Reference proteome</keyword>
<accession>P0A808</accession>
<accession>P16174</accession>
<name>RRF_SHIFL</name>